<dbReference type="EMBL" id="M74171">
    <property type="protein sequence ID" value="AAA25590.1"/>
    <property type="molecule type" value="Genomic_DNA"/>
</dbReference>
<dbReference type="PIR" id="C40296">
    <property type="entry name" value="C40296"/>
</dbReference>
<dbReference type="RefSeq" id="WP_011748530.1">
    <property type="nucleotide sequence ID" value="NZ_JAOSHR010000005.1"/>
</dbReference>
<dbReference type="SMR" id="P29907"/>
<dbReference type="GeneID" id="93450643"/>
<dbReference type="OMA" id="WVWRERK"/>
<dbReference type="GO" id="GO:0005886">
    <property type="term" value="C:plasma membrane"/>
    <property type="evidence" value="ECO:0007669"/>
    <property type="project" value="UniProtKB-SubCell"/>
</dbReference>
<dbReference type="InterPro" id="IPR020308">
    <property type="entry name" value="Uncharacterised_Ynq1"/>
</dbReference>
<dbReference type="Pfam" id="PF17272">
    <property type="entry name" value="DUF5337"/>
    <property type="match status" value="1"/>
</dbReference>
<protein>
    <recommendedName>
        <fullName>Uncharacterized 9.3 kDa protein in nqo2 3'region</fullName>
    </recommendedName>
    <alternativeName>
        <fullName>URF1</fullName>
    </alternativeName>
</protein>
<evidence type="ECO:0000255" key="1"/>
<evidence type="ECO:0000305" key="2"/>
<reference key="1">
    <citation type="journal article" date="1991" name="Biochemistry">
        <title>Characterization of the 25-kilodalton subunit of the energy-transducing NADH-ubiquinone oxidoreductase of Paracoccus denitrificans: sequence similarity to the 24-kilodalton subunit of the flavoprotein fraction of mammalian complex I.</title>
        <authorList>
            <person name="Xu X."/>
            <person name="Matsuno-Yagi A."/>
            <person name="Yagi T."/>
        </authorList>
    </citation>
    <scope>NUCLEOTIDE SEQUENCE [GENOMIC DNA]</scope>
    <source>
        <strain>ATCC 13543 / NRRL B-3784 / NRC 449</strain>
    </source>
</reference>
<sequence length="87" mass="9277">MARPAGHAASQAGGTAAADARQMRLVAAVIAVTMALWLGVQWLGGQQDWPAKYAFLADLAAIGALIWSLLVTFRIWRRRKASSQGQG</sequence>
<proteinExistence type="predicted"/>
<keyword id="KW-1003">Cell membrane</keyword>
<keyword id="KW-0472">Membrane</keyword>
<keyword id="KW-0812">Transmembrane</keyword>
<keyword id="KW-1133">Transmembrane helix</keyword>
<feature type="chain" id="PRO_0000066337" description="Uncharacterized 9.3 kDa protein in nqo2 3'region">
    <location>
        <begin position="1"/>
        <end position="87"/>
    </location>
</feature>
<feature type="transmembrane region" description="Helical" evidence="1">
    <location>
        <begin position="25"/>
        <end position="45"/>
    </location>
</feature>
<feature type="transmembrane region" description="Helical" evidence="1">
    <location>
        <begin position="53"/>
        <end position="73"/>
    </location>
</feature>
<organism>
    <name type="scientific">Paracoccus denitrificans</name>
    <dbReference type="NCBI Taxonomy" id="266"/>
    <lineage>
        <taxon>Bacteria</taxon>
        <taxon>Pseudomonadati</taxon>
        <taxon>Pseudomonadota</taxon>
        <taxon>Alphaproteobacteria</taxon>
        <taxon>Rhodobacterales</taxon>
        <taxon>Paracoccaceae</taxon>
        <taxon>Paracoccus</taxon>
    </lineage>
</organism>
<comment type="subcellular location">
    <subcellularLocation>
        <location evidence="2">Cell membrane</location>
        <topology evidence="2">Multi-pass membrane protein</topology>
    </subcellularLocation>
</comment>
<name>YNQ1_PARDE</name>
<accession>P29907</accession>